<feature type="chain" id="PRO_0000414692" description="Cell division protein FtsQ">
    <location>
        <begin position="1"/>
        <end position="259"/>
    </location>
</feature>
<feature type="topological domain" description="Cytoplasmic" evidence="1">
    <location>
        <begin position="1"/>
        <end position="15"/>
    </location>
</feature>
<feature type="transmembrane region" description="Helical" evidence="1">
    <location>
        <begin position="16"/>
        <end position="36"/>
    </location>
</feature>
<feature type="topological domain" description="Periplasmic" evidence="1">
    <location>
        <begin position="37"/>
        <end position="259"/>
    </location>
</feature>
<feature type="domain" description="POTRA" evidence="2">
    <location>
        <begin position="40"/>
        <end position="109"/>
    </location>
</feature>
<keyword id="KW-0131">Cell cycle</keyword>
<keyword id="KW-0132">Cell division</keyword>
<keyword id="KW-0997">Cell inner membrane</keyword>
<keyword id="KW-1003">Cell membrane</keyword>
<keyword id="KW-0472">Membrane</keyword>
<keyword id="KW-1185">Reference proteome</keyword>
<keyword id="KW-0812">Transmembrane</keyword>
<keyword id="KW-1133">Transmembrane helix</keyword>
<organism>
    <name type="scientific">Salinibacter ruber (strain DSM 13855 / M31)</name>
    <dbReference type="NCBI Taxonomy" id="309807"/>
    <lineage>
        <taxon>Bacteria</taxon>
        <taxon>Pseudomonadati</taxon>
        <taxon>Rhodothermota</taxon>
        <taxon>Rhodothermia</taxon>
        <taxon>Rhodothermales</taxon>
        <taxon>Salinibacteraceae</taxon>
        <taxon>Salinibacter</taxon>
    </lineage>
</organism>
<dbReference type="EMBL" id="CP000159">
    <property type="protein sequence ID" value="ABC44248.1"/>
    <property type="molecule type" value="Genomic_DNA"/>
</dbReference>
<dbReference type="RefSeq" id="WP_011403338.1">
    <property type="nucleotide sequence ID" value="NC_007677.1"/>
</dbReference>
<dbReference type="RefSeq" id="YP_444705.1">
    <property type="nucleotide sequence ID" value="NC_007677.1"/>
</dbReference>
<dbReference type="SMR" id="Q2S526"/>
<dbReference type="STRING" id="309807.SRU_0562"/>
<dbReference type="EnsemblBacteria" id="ABC44248">
    <property type="protein sequence ID" value="ABC44248"/>
    <property type="gene ID" value="SRU_0562"/>
</dbReference>
<dbReference type="KEGG" id="sru:SRU_0562"/>
<dbReference type="eggNOG" id="COG1589">
    <property type="taxonomic scope" value="Bacteria"/>
</dbReference>
<dbReference type="HOGENOM" id="CLU_1073209_0_0_10"/>
<dbReference type="OrthoDB" id="1523641at2"/>
<dbReference type="Proteomes" id="UP000008674">
    <property type="component" value="Chromosome"/>
</dbReference>
<dbReference type="GO" id="GO:0032153">
    <property type="term" value="C:cell division site"/>
    <property type="evidence" value="ECO:0007669"/>
    <property type="project" value="UniProtKB-UniRule"/>
</dbReference>
<dbReference type="GO" id="GO:0005886">
    <property type="term" value="C:plasma membrane"/>
    <property type="evidence" value="ECO:0007669"/>
    <property type="project" value="UniProtKB-SubCell"/>
</dbReference>
<dbReference type="GO" id="GO:0090529">
    <property type="term" value="P:cell septum assembly"/>
    <property type="evidence" value="ECO:0007669"/>
    <property type="project" value="InterPro"/>
</dbReference>
<dbReference type="GO" id="GO:0043093">
    <property type="term" value="P:FtsZ-dependent cytokinesis"/>
    <property type="evidence" value="ECO:0007669"/>
    <property type="project" value="UniProtKB-UniRule"/>
</dbReference>
<dbReference type="Gene3D" id="3.40.50.11690">
    <property type="entry name" value="Cell division protein FtsQ/DivIB"/>
    <property type="match status" value="1"/>
</dbReference>
<dbReference type="Gene3D" id="3.10.20.310">
    <property type="entry name" value="membrane protein fhac"/>
    <property type="match status" value="1"/>
</dbReference>
<dbReference type="HAMAP" id="MF_00911">
    <property type="entry name" value="FtsQ_subfam"/>
    <property type="match status" value="1"/>
</dbReference>
<dbReference type="InterPro" id="IPR005548">
    <property type="entry name" value="Cell_div_FtsQ/DivIB_C"/>
</dbReference>
<dbReference type="InterPro" id="IPR026579">
    <property type="entry name" value="FtsQ"/>
</dbReference>
<dbReference type="InterPro" id="IPR045335">
    <property type="entry name" value="FtsQ_C_sf"/>
</dbReference>
<dbReference type="InterPro" id="IPR034746">
    <property type="entry name" value="POTRA"/>
</dbReference>
<dbReference type="InterPro" id="IPR013685">
    <property type="entry name" value="POTRA_FtsQ_type"/>
</dbReference>
<dbReference type="PANTHER" id="PTHR35851">
    <property type="entry name" value="CELL DIVISION PROTEIN FTSQ"/>
    <property type="match status" value="1"/>
</dbReference>
<dbReference type="PANTHER" id="PTHR35851:SF1">
    <property type="entry name" value="CELL DIVISION PROTEIN FTSQ"/>
    <property type="match status" value="1"/>
</dbReference>
<dbReference type="Pfam" id="PF03799">
    <property type="entry name" value="FtsQ_DivIB_C"/>
    <property type="match status" value="1"/>
</dbReference>
<dbReference type="Pfam" id="PF08478">
    <property type="entry name" value="POTRA_1"/>
    <property type="match status" value="1"/>
</dbReference>
<dbReference type="PROSITE" id="PS51779">
    <property type="entry name" value="POTRA"/>
    <property type="match status" value="1"/>
</dbReference>
<reference key="1">
    <citation type="journal article" date="2005" name="Proc. Natl. Acad. Sci. U.S.A.">
        <title>The genome of Salinibacter ruber: convergence and gene exchange among hyperhalophilic bacteria and archaea.</title>
        <authorList>
            <person name="Mongodin E.F."/>
            <person name="Nelson K.E."/>
            <person name="Daugherty S."/>
            <person name="DeBoy R.T."/>
            <person name="Wister J."/>
            <person name="Khouri H."/>
            <person name="Weidman J."/>
            <person name="Walsh D.A."/>
            <person name="Papke R.T."/>
            <person name="Sanchez Perez G."/>
            <person name="Sharma A.K."/>
            <person name="Nesbo C.L."/>
            <person name="MacLeod D."/>
            <person name="Bapteste E."/>
            <person name="Doolittle W.F."/>
            <person name="Charlebois R.L."/>
            <person name="Legault B."/>
            <person name="Rodriguez-Valera F."/>
        </authorList>
    </citation>
    <scope>NUCLEOTIDE SEQUENCE [LARGE SCALE GENOMIC DNA]</scope>
    <source>
        <strain>DSM 13855 / CECT 5946 / M31</strain>
    </source>
</reference>
<sequence>MTRDQTATFGRHALRVAGSGLLVAGVVALGLLGWQWRANVTVDRVAVTGAQHAPPDTLRRLARVGRGTAMRAVAPMLVADRVARHPWVKEATAETQWMQGALTISVTERTPAALAVDAQGRPAYYLDRSGHAMPLPDSAGYDVPLVRGLEAEAPWTQPDTAQTPSSLRRVLRALPEAGVADLVAEIEMQPDDAIQLTTTPIGPHDALPVHLGSGNVSRKLRTLRAFARQVLASSPDEPIERIDLRFDGQVVTRTRPLDG</sequence>
<protein>
    <recommendedName>
        <fullName evidence="1">Cell division protein FtsQ</fullName>
    </recommendedName>
</protein>
<proteinExistence type="inferred from homology"/>
<evidence type="ECO:0000255" key="1">
    <source>
        <dbReference type="HAMAP-Rule" id="MF_00911"/>
    </source>
</evidence>
<evidence type="ECO:0000255" key="2">
    <source>
        <dbReference type="PROSITE-ProRule" id="PRU01115"/>
    </source>
</evidence>
<comment type="function">
    <text evidence="1">Essential cell division protein.</text>
</comment>
<comment type="subcellular location">
    <subcellularLocation>
        <location evidence="1">Cell inner membrane</location>
        <topology evidence="1">Single-pass type II membrane protein</topology>
    </subcellularLocation>
    <text evidence="1">Localizes to the division septum.</text>
</comment>
<comment type="similarity">
    <text evidence="1">Belongs to the FtsQ/DivIB family. FtsQ subfamily.</text>
</comment>
<name>FTSQ_SALRD</name>
<accession>Q2S526</accession>
<gene>
    <name evidence="1" type="primary">ftsQ</name>
    <name type="ordered locus">SRU_0562</name>
</gene>